<accession>Q9NX00</accession>
<accession>Q9BU41</accession>
<sequence length="188" mass="19658">MGGGWWWARAARLARLRFRRSLLPPQRPRSGGARGSFAPGHGPRAGASPPPVSELDRADAWLLRKAHETAFLSWFRNGLLASGIGVISFMQSDMGREAAYGFFLLGGLCVVWGSASYAVGLAALRGPMQLTLGGAAVGAGAVLAASLLWACAVGLYMGQLELDVELVPEDDGTASAEGPDEAGRPPPE</sequence>
<feature type="transit peptide" description="Mitochondrion" evidence="1">
    <location>
        <begin position="1"/>
        <end position="96"/>
    </location>
</feature>
<feature type="chain" id="PRO_0000277810" description="Transmembrane protein 160" evidence="1">
    <location>
        <begin position="97"/>
        <end position="188"/>
    </location>
</feature>
<feature type="transmembrane region" description="Helical" evidence="1">
    <location>
        <begin position="102"/>
        <end position="122"/>
    </location>
</feature>
<feature type="transmembrane region" description="Helical" evidence="1">
    <location>
        <begin position="135"/>
        <end position="155"/>
    </location>
</feature>
<feature type="region of interest" description="Disordered" evidence="2">
    <location>
        <begin position="24"/>
        <end position="52"/>
    </location>
</feature>
<feature type="region of interest" description="Disordered" evidence="2">
    <location>
        <begin position="168"/>
        <end position="188"/>
    </location>
</feature>
<feature type="modified residue" description="Phosphoserine" evidence="7">
    <location>
        <position position="48"/>
    </location>
</feature>
<feature type="sequence variant" id="VAR_030600" description="In dbSNP:rs11083857." evidence="3">
    <original>G</original>
    <variation>S</variation>
    <location>
        <position position="120"/>
    </location>
</feature>
<comment type="interaction">
    <interactant intactId="EBI-2514588">
        <id>Q9NX00</id>
    </interactant>
    <interactant intactId="EBI-4319440">
        <id>P54849</id>
        <label>EMP1</label>
    </interactant>
    <organismsDiffer>false</organismsDiffer>
    <experiments>3</experiments>
</comment>
<comment type="interaction">
    <interactant intactId="EBI-2514588">
        <id>Q9NX00</id>
    </interactant>
    <interactant intactId="EBI-12243266">
        <id>Q7RTY0</id>
        <label>SLC16A13</label>
    </interactant>
    <organismsDiffer>false</organismsDiffer>
    <experiments>3</experiments>
</comment>
<comment type="subcellular location">
    <subcellularLocation>
        <location evidence="5">Mitochondrion inner membrane</location>
        <topology evidence="1">Multi-pass membrane protein</topology>
    </subcellularLocation>
</comment>
<comment type="similarity">
    <text evidence="4">Belongs to the TMEM160 family.</text>
</comment>
<proteinExistence type="evidence at protein level"/>
<evidence type="ECO:0000255" key="1"/>
<evidence type="ECO:0000256" key="2">
    <source>
        <dbReference type="SAM" id="MobiDB-lite"/>
    </source>
</evidence>
<evidence type="ECO:0000269" key="3">
    <source>
    </source>
</evidence>
<evidence type="ECO:0000305" key="4"/>
<evidence type="ECO:0000305" key="5">
    <source>
    </source>
</evidence>
<evidence type="ECO:0000312" key="6">
    <source>
        <dbReference type="HGNC" id="HGNC:26042"/>
    </source>
</evidence>
<evidence type="ECO:0007744" key="7">
    <source>
    </source>
</evidence>
<dbReference type="EMBL" id="AK000519">
    <property type="protein sequence ID" value="BAA91225.1"/>
    <property type="molecule type" value="mRNA"/>
</dbReference>
<dbReference type="EMBL" id="BC002907">
    <property type="protein sequence ID" value="AAH02907.1"/>
    <property type="molecule type" value="mRNA"/>
</dbReference>
<dbReference type="CCDS" id="CCDS12695.1"/>
<dbReference type="RefSeq" id="NP_060324.1">
    <property type="nucleotide sequence ID" value="NM_017854.2"/>
</dbReference>
<dbReference type="BioGRID" id="120296">
    <property type="interactions" value="108"/>
</dbReference>
<dbReference type="FunCoup" id="Q9NX00">
    <property type="interactions" value="576"/>
</dbReference>
<dbReference type="IntAct" id="Q9NX00">
    <property type="interactions" value="67"/>
</dbReference>
<dbReference type="MINT" id="Q9NX00"/>
<dbReference type="STRING" id="9606.ENSP00000253047"/>
<dbReference type="TCDB" id="8.A.184.1.1">
    <property type="family name" value="the transmembrane protein tmem160 (tmem160) family"/>
</dbReference>
<dbReference type="GlyGen" id="Q9NX00">
    <property type="glycosylation" value="1 site, 1 O-linked glycan (1 site)"/>
</dbReference>
<dbReference type="iPTMnet" id="Q9NX00"/>
<dbReference type="PhosphoSitePlus" id="Q9NX00"/>
<dbReference type="SwissPalm" id="Q9NX00"/>
<dbReference type="BioMuta" id="TMEM160"/>
<dbReference type="DMDM" id="74719401"/>
<dbReference type="jPOST" id="Q9NX00"/>
<dbReference type="MassIVE" id="Q9NX00"/>
<dbReference type="PaxDb" id="9606-ENSP00000253047"/>
<dbReference type="PeptideAtlas" id="Q9NX00"/>
<dbReference type="ProteomicsDB" id="83007"/>
<dbReference type="Pumba" id="Q9NX00"/>
<dbReference type="TopDownProteomics" id="Q9NX00"/>
<dbReference type="Antibodypedia" id="65063">
    <property type="antibodies" value="14 antibodies from 12 providers"/>
</dbReference>
<dbReference type="DNASU" id="54958"/>
<dbReference type="Ensembl" id="ENST00000253047.7">
    <property type="protein sequence ID" value="ENSP00000253047.5"/>
    <property type="gene ID" value="ENSG00000130748.7"/>
</dbReference>
<dbReference type="GeneID" id="54958"/>
<dbReference type="KEGG" id="hsa:54958"/>
<dbReference type="MANE-Select" id="ENST00000253047.7">
    <property type="protein sequence ID" value="ENSP00000253047.5"/>
    <property type="RefSeq nucleotide sequence ID" value="NM_017854.2"/>
    <property type="RefSeq protein sequence ID" value="NP_060324.1"/>
</dbReference>
<dbReference type="UCSC" id="uc002pfz.4">
    <property type="organism name" value="human"/>
</dbReference>
<dbReference type="AGR" id="HGNC:26042"/>
<dbReference type="CTD" id="54958"/>
<dbReference type="DisGeNET" id="54958"/>
<dbReference type="GeneCards" id="TMEM160"/>
<dbReference type="HGNC" id="HGNC:26042">
    <property type="gene designation" value="TMEM160"/>
</dbReference>
<dbReference type="HPA" id="ENSG00000130748">
    <property type="expression patterns" value="Tissue enhanced (brain)"/>
</dbReference>
<dbReference type="MIM" id="620258">
    <property type="type" value="gene"/>
</dbReference>
<dbReference type="neXtProt" id="NX_Q9NX00"/>
<dbReference type="OpenTargets" id="ENSG00000130748"/>
<dbReference type="PharmGKB" id="PA145147949"/>
<dbReference type="VEuPathDB" id="HostDB:ENSG00000130748"/>
<dbReference type="eggNOG" id="ENOG502S3E7">
    <property type="taxonomic scope" value="Eukaryota"/>
</dbReference>
<dbReference type="GeneTree" id="ENSGT00390000012863"/>
<dbReference type="HOGENOM" id="CLU_110295_0_0_1"/>
<dbReference type="InParanoid" id="Q9NX00"/>
<dbReference type="OMA" id="WWARARL"/>
<dbReference type="OrthoDB" id="9944412at2759"/>
<dbReference type="PAN-GO" id="Q9NX00">
    <property type="GO annotations" value="0 GO annotations based on evolutionary models"/>
</dbReference>
<dbReference type="PhylomeDB" id="Q9NX00"/>
<dbReference type="TreeFam" id="TF338764"/>
<dbReference type="PathwayCommons" id="Q9NX00"/>
<dbReference type="SignaLink" id="Q9NX00"/>
<dbReference type="BioGRID-ORCS" id="54958">
    <property type="hits" value="22 hits in 1155 CRISPR screens"/>
</dbReference>
<dbReference type="GenomeRNAi" id="54958"/>
<dbReference type="Pharos" id="Q9NX00">
    <property type="development level" value="Tdark"/>
</dbReference>
<dbReference type="PRO" id="PR:Q9NX00"/>
<dbReference type="Proteomes" id="UP000005640">
    <property type="component" value="Chromosome 19"/>
</dbReference>
<dbReference type="RNAct" id="Q9NX00">
    <property type="molecule type" value="protein"/>
</dbReference>
<dbReference type="Bgee" id="ENSG00000130748">
    <property type="expression patterns" value="Expressed in amygdala and 168 other cell types or tissues"/>
</dbReference>
<dbReference type="GO" id="GO:0005743">
    <property type="term" value="C:mitochondrial inner membrane"/>
    <property type="evidence" value="ECO:0000314"/>
    <property type="project" value="UniProtKB"/>
</dbReference>
<dbReference type="GO" id="GO:0005739">
    <property type="term" value="C:mitochondrion"/>
    <property type="evidence" value="ECO:0006056"/>
    <property type="project" value="FlyBase"/>
</dbReference>
<dbReference type="InterPro" id="IPR026801">
    <property type="entry name" value="TMEM160"/>
</dbReference>
<dbReference type="PANTHER" id="PTHR16236">
    <property type="entry name" value="TRANSMEMBRANE PROTEIN 160"/>
    <property type="match status" value="1"/>
</dbReference>
<dbReference type="PANTHER" id="PTHR16236:SF0">
    <property type="entry name" value="TRANSMEMBRANE PROTEIN 160"/>
    <property type="match status" value="1"/>
</dbReference>
<organism>
    <name type="scientific">Homo sapiens</name>
    <name type="common">Human</name>
    <dbReference type="NCBI Taxonomy" id="9606"/>
    <lineage>
        <taxon>Eukaryota</taxon>
        <taxon>Metazoa</taxon>
        <taxon>Chordata</taxon>
        <taxon>Craniata</taxon>
        <taxon>Vertebrata</taxon>
        <taxon>Euteleostomi</taxon>
        <taxon>Mammalia</taxon>
        <taxon>Eutheria</taxon>
        <taxon>Euarchontoglires</taxon>
        <taxon>Primates</taxon>
        <taxon>Haplorrhini</taxon>
        <taxon>Catarrhini</taxon>
        <taxon>Hominidae</taxon>
        <taxon>Homo</taxon>
    </lineage>
</organism>
<name>TM160_HUMAN</name>
<reference key="1">
    <citation type="journal article" date="2004" name="Nat. Genet.">
        <title>Complete sequencing and characterization of 21,243 full-length human cDNAs.</title>
        <authorList>
            <person name="Ota T."/>
            <person name="Suzuki Y."/>
            <person name="Nishikawa T."/>
            <person name="Otsuki T."/>
            <person name="Sugiyama T."/>
            <person name="Irie R."/>
            <person name="Wakamatsu A."/>
            <person name="Hayashi K."/>
            <person name="Sato H."/>
            <person name="Nagai K."/>
            <person name="Kimura K."/>
            <person name="Makita H."/>
            <person name="Sekine M."/>
            <person name="Obayashi M."/>
            <person name="Nishi T."/>
            <person name="Shibahara T."/>
            <person name="Tanaka T."/>
            <person name="Ishii S."/>
            <person name="Yamamoto J."/>
            <person name="Saito K."/>
            <person name="Kawai Y."/>
            <person name="Isono Y."/>
            <person name="Nakamura Y."/>
            <person name="Nagahari K."/>
            <person name="Murakami K."/>
            <person name="Yasuda T."/>
            <person name="Iwayanagi T."/>
            <person name="Wagatsuma M."/>
            <person name="Shiratori A."/>
            <person name="Sudo H."/>
            <person name="Hosoiri T."/>
            <person name="Kaku Y."/>
            <person name="Kodaira H."/>
            <person name="Kondo H."/>
            <person name="Sugawara M."/>
            <person name="Takahashi M."/>
            <person name="Kanda K."/>
            <person name="Yokoi T."/>
            <person name="Furuya T."/>
            <person name="Kikkawa E."/>
            <person name="Omura Y."/>
            <person name="Abe K."/>
            <person name="Kamihara K."/>
            <person name="Katsuta N."/>
            <person name="Sato K."/>
            <person name="Tanikawa M."/>
            <person name="Yamazaki M."/>
            <person name="Ninomiya K."/>
            <person name="Ishibashi T."/>
            <person name="Yamashita H."/>
            <person name="Murakawa K."/>
            <person name="Fujimori K."/>
            <person name="Tanai H."/>
            <person name="Kimata M."/>
            <person name="Watanabe M."/>
            <person name="Hiraoka S."/>
            <person name="Chiba Y."/>
            <person name="Ishida S."/>
            <person name="Ono Y."/>
            <person name="Takiguchi S."/>
            <person name="Watanabe S."/>
            <person name="Yosida M."/>
            <person name="Hotuta T."/>
            <person name="Kusano J."/>
            <person name="Kanehori K."/>
            <person name="Takahashi-Fujii A."/>
            <person name="Hara H."/>
            <person name="Tanase T.-O."/>
            <person name="Nomura Y."/>
            <person name="Togiya S."/>
            <person name="Komai F."/>
            <person name="Hara R."/>
            <person name="Takeuchi K."/>
            <person name="Arita M."/>
            <person name="Imose N."/>
            <person name="Musashino K."/>
            <person name="Yuuki H."/>
            <person name="Oshima A."/>
            <person name="Sasaki N."/>
            <person name="Aotsuka S."/>
            <person name="Yoshikawa Y."/>
            <person name="Matsunawa H."/>
            <person name="Ichihara T."/>
            <person name="Shiohata N."/>
            <person name="Sano S."/>
            <person name="Moriya S."/>
            <person name="Momiyama H."/>
            <person name="Satoh N."/>
            <person name="Takami S."/>
            <person name="Terashima Y."/>
            <person name="Suzuki O."/>
            <person name="Nakagawa S."/>
            <person name="Senoh A."/>
            <person name="Mizoguchi H."/>
            <person name="Goto Y."/>
            <person name="Shimizu F."/>
            <person name="Wakebe H."/>
            <person name="Hishigaki H."/>
            <person name="Watanabe T."/>
            <person name="Sugiyama A."/>
            <person name="Takemoto M."/>
            <person name="Kawakami B."/>
            <person name="Yamazaki M."/>
            <person name="Watanabe K."/>
            <person name="Kumagai A."/>
            <person name="Itakura S."/>
            <person name="Fukuzumi Y."/>
            <person name="Fujimori Y."/>
            <person name="Komiyama M."/>
            <person name="Tashiro H."/>
            <person name="Tanigami A."/>
            <person name="Fujiwara T."/>
            <person name="Ono T."/>
            <person name="Yamada K."/>
            <person name="Fujii Y."/>
            <person name="Ozaki K."/>
            <person name="Hirao M."/>
            <person name="Ohmori Y."/>
            <person name="Kawabata A."/>
            <person name="Hikiji T."/>
            <person name="Kobatake N."/>
            <person name="Inagaki H."/>
            <person name="Ikema Y."/>
            <person name="Okamoto S."/>
            <person name="Okitani R."/>
            <person name="Kawakami T."/>
            <person name="Noguchi S."/>
            <person name="Itoh T."/>
            <person name="Shigeta K."/>
            <person name="Senba T."/>
            <person name="Matsumura K."/>
            <person name="Nakajima Y."/>
            <person name="Mizuno T."/>
            <person name="Morinaga M."/>
            <person name="Sasaki M."/>
            <person name="Togashi T."/>
            <person name="Oyama M."/>
            <person name="Hata H."/>
            <person name="Watanabe M."/>
            <person name="Komatsu T."/>
            <person name="Mizushima-Sugano J."/>
            <person name="Satoh T."/>
            <person name="Shirai Y."/>
            <person name="Takahashi Y."/>
            <person name="Nakagawa K."/>
            <person name="Okumura K."/>
            <person name="Nagase T."/>
            <person name="Nomura N."/>
            <person name="Kikuchi H."/>
            <person name="Masuho Y."/>
            <person name="Yamashita R."/>
            <person name="Nakai K."/>
            <person name="Yada T."/>
            <person name="Nakamura Y."/>
            <person name="Ohara O."/>
            <person name="Isogai T."/>
            <person name="Sugano S."/>
        </authorList>
    </citation>
    <scope>NUCLEOTIDE SEQUENCE [LARGE SCALE MRNA]</scope>
</reference>
<reference key="2">
    <citation type="journal article" date="2004" name="Genome Res.">
        <title>The status, quality, and expansion of the NIH full-length cDNA project: the Mammalian Gene Collection (MGC).</title>
        <authorList>
            <consortium name="The MGC Project Team"/>
        </authorList>
    </citation>
    <scope>NUCLEOTIDE SEQUENCE [LARGE SCALE MRNA]</scope>
    <scope>VARIANT SER-120</scope>
    <source>
        <tissue>Lung</tissue>
    </source>
</reference>
<reference key="3">
    <citation type="journal article" date="2011" name="BMC Syst. Biol.">
        <title>Initial characterization of the human central proteome.</title>
        <authorList>
            <person name="Burkard T.R."/>
            <person name="Planyavsky M."/>
            <person name="Kaupe I."/>
            <person name="Breitwieser F.P."/>
            <person name="Buerckstuemmer T."/>
            <person name="Bennett K.L."/>
            <person name="Superti-Furga G."/>
            <person name="Colinge J."/>
        </authorList>
    </citation>
    <scope>IDENTIFICATION BY MASS SPECTROMETRY [LARGE SCALE ANALYSIS]</scope>
</reference>
<reference key="4">
    <citation type="journal article" date="2013" name="J. Proteome Res.">
        <title>Toward a comprehensive characterization of a human cancer cell phosphoproteome.</title>
        <authorList>
            <person name="Zhou H."/>
            <person name="Di Palma S."/>
            <person name="Preisinger C."/>
            <person name="Peng M."/>
            <person name="Polat A.N."/>
            <person name="Heck A.J."/>
            <person name="Mohammed S."/>
        </authorList>
    </citation>
    <scope>PHOSPHORYLATION [LARGE SCALE ANALYSIS] AT SER-48</scope>
    <scope>IDENTIFICATION BY MASS SPECTROMETRY [LARGE SCALE ANALYSIS]</scope>
    <source>
        <tissue>Erythroleukemia</tissue>
    </source>
</reference>
<reference key="5">
    <citation type="journal article" date="2015" name="Proteomics">
        <title>N-terminome analysis of the human mitochondrial proteome.</title>
        <authorList>
            <person name="Vaca Jacome A.S."/>
            <person name="Rabilloud T."/>
            <person name="Schaeffer-Reiss C."/>
            <person name="Rompais M."/>
            <person name="Ayoub D."/>
            <person name="Lane L."/>
            <person name="Bairoch A."/>
            <person name="Van Dorsselaer A."/>
            <person name="Carapito C."/>
        </authorList>
    </citation>
    <scope>IDENTIFICATION BY MASS SPECTROMETRY [LARGE SCALE ANALYSIS]</scope>
</reference>
<reference key="6">
    <citation type="journal article" date="2021" name="Cell Rep.">
        <title>Tmem160 contributes to the establishment of discrete nerve injury-induced pain behaviors in male mice.</title>
        <authorList>
            <person name="Segelcke D."/>
            <person name="Fischer H.K."/>
            <person name="Huette M."/>
            <person name="Dennerlein S."/>
            <person name="Benseler F."/>
            <person name="Brose N."/>
            <person name="Pogatzki-Zahn E.M."/>
            <person name="Schmidt M."/>
        </authorList>
    </citation>
    <scope>SUBCELLULAR LOCATION</scope>
</reference>
<gene>
    <name evidence="6" type="primary">TMEM160</name>
</gene>
<protein>
    <recommendedName>
        <fullName evidence="4">Transmembrane protein 160</fullName>
    </recommendedName>
</protein>
<keyword id="KW-0472">Membrane</keyword>
<keyword id="KW-0496">Mitochondrion</keyword>
<keyword id="KW-0999">Mitochondrion inner membrane</keyword>
<keyword id="KW-0597">Phosphoprotein</keyword>
<keyword id="KW-1267">Proteomics identification</keyword>
<keyword id="KW-1185">Reference proteome</keyword>
<keyword id="KW-0809">Transit peptide</keyword>
<keyword id="KW-0812">Transmembrane</keyword>
<keyword id="KW-1133">Transmembrane helix</keyword>